<feature type="chain" id="PRO_0000244104" description="Doublesex- and mab-3-related transcription factor C1">
    <location>
        <begin position="1"/>
        <end position="225"/>
    </location>
</feature>
<feature type="region of interest" description="Disordered" evidence="1">
    <location>
        <begin position="1"/>
        <end position="49"/>
    </location>
</feature>
<feature type="region of interest" description="Disordered" evidence="1">
    <location>
        <begin position="179"/>
        <end position="216"/>
    </location>
</feature>
<feature type="compositionally biased region" description="Basic and acidic residues" evidence="1">
    <location>
        <begin position="1"/>
        <end position="12"/>
    </location>
</feature>
<feature type="compositionally biased region" description="Basic residues" evidence="1">
    <location>
        <begin position="27"/>
        <end position="37"/>
    </location>
</feature>
<gene>
    <name type="primary">Dmrtc1</name>
</gene>
<dbReference type="EMBL" id="BC097356">
    <property type="protein sequence ID" value="AAH97356.1"/>
    <property type="molecule type" value="mRNA"/>
</dbReference>
<dbReference type="RefSeq" id="NP_001020459.1">
    <property type="nucleotide sequence ID" value="NM_001025288.1"/>
</dbReference>
<dbReference type="RefSeq" id="XP_017443741.1">
    <property type="nucleotide sequence ID" value="XM_017588252.1"/>
</dbReference>
<dbReference type="FunCoup" id="Q4QR87">
    <property type="interactions" value="2"/>
</dbReference>
<dbReference type="STRING" id="10116.ENSRNOP00000069916"/>
<dbReference type="PaxDb" id="10116-ENSRNOP00000066671"/>
<dbReference type="Ensembl" id="ENSRNOT00000089965.2">
    <property type="protein sequence ID" value="ENSRNOP00000069916.1"/>
    <property type="gene ID" value="ENSRNOG00000048295.3"/>
</dbReference>
<dbReference type="GeneID" id="108348153"/>
<dbReference type="KEGG" id="rno:108348153"/>
<dbReference type="AGR" id="RGD:11451771"/>
<dbReference type="CTD" id="70887"/>
<dbReference type="RGD" id="1562908">
    <property type="gene designation" value="MGC114388"/>
</dbReference>
<dbReference type="eggNOG" id="KOG3815">
    <property type="taxonomic scope" value="Eukaryota"/>
</dbReference>
<dbReference type="GeneTree" id="ENSGT00940000156489"/>
<dbReference type="HOGENOM" id="CLU_050863_2_0_1"/>
<dbReference type="InParanoid" id="Q4QR87"/>
<dbReference type="OrthoDB" id="9663956at2759"/>
<dbReference type="PhylomeDB" id="Q4QR87"/>
<dbReference type="PRO" id="PR:Q4QR87"/>
<dbReference type="Proteomes" id="UP000002494">
    <property type="component" value="Chromosome X"/>
</dbReference>
<dbReference type="Bgee" id="ENSRNOG00000060738">
    <property type="expression patterns" value="Expressed in testis and 5 other cell types or tissues"/>
</dbReference>
<dbReference type="GO" id="GO:0005634">
    <property type="term" value="C:nucleus"/>
    <property type="evidence" value="ECO:0000318"/>
    <property type="project" value="GO_Central"/>
</dbReference>
<dbReference type="InterPro" id="IPR031577">
    <property type="entry name" value="DMRT-C1/C2_C"/>
</dbReference>
<dbReference type="Pfam" id="PF15791">
    <property type="entry name" value="DMRT-like"/>
    <property type="match status" value="1"/>
</dbReference>
<comment type="similarity">
    <text evidence="2">Belongs to the DMRT family.</text>
</comment>
<comment type="caution">
    <text evidence="2">Although related to other DMRT proteins, it does not contain a canonical DM DNA-binding domain.</text>
</comment>
<evidence type="ECO:0000256" key="1">
    <source>
        <dbReference type="SAM" id="MobiDB-lite"/>
    </source>
</evidence>
<evidence type="ECO:0000305" key="2"/>
<protein>
    <recommendedName>
        <fullName>Doublesex- and mab-3-related transcription factor C1</fullName>
    </recommendedName>
</protein>
<organism>
    <name type="scientific">Rattus norvegicus</name>
    <name type="common">Rat</name>
    <dbReference type="NCBI Taxonomy" id="10116"/>
    <lineage>
        <taxon>Eukaryota</taxon>
        <taxon>Metazoa</taxon>
        <taxon>Chordata</taxon>
        <taxon>Craniata</taxon>
        <taxon>Vertebrata</taxon>
        <taxon>Euteleostomi</taxon>
        <taxon>Mammalia</taxon>
        <taxon>Eutheria</taxon>
        <taxon>Euarchontoglires</taxon>
        <taxon>Glires</taxon>
        <taxon>Rodentia</taxon>
        <taxon>Myomorpha</taxon>
        <taxon>Muroidea</taxon>
        <taxon>Muridae</taxon>
        <taxon>Murinae</taxon>
        <taxon>Rattus</taxon>
    </lineage>
</organism>
<keyword id="KW-1185">Reference proteome</keyword>
<keyword id="KW-0804">Transcription</keyword>
<keyword id="KW-0805">Transcription regulation</keyword>
<sequence length="225" mass="23842">MQRPSGSREVRKAVSAVSASKKEQATRVKKHVVRRQKGTMAAAPKSHVHVKKLTVEEGVRTGKNSVHQLQAQVDTATQQESSQGPVLLSQLPETTSVPYTPETMGQQLTVSLSGEPYGPSAMPSMCPSLILQPCATTDPMLLQPQGSSASNQASVSATLEWQEMLEAAEALLALKNSSQTRHQPCGMPGTAGERGLQLPNPSMPPRPASSGSLPSGHLDCMSLLT</sequence>
<proteinExistence type="evidence at transcript level"/>
<reference key="1">
    <citation type="journal article" date="2004" name="Genome Res.">
        <title>The status, quality, and expansion of the NIH full-length cDNA project: the Mammalian Gene Collection (MGC).</title>
        <authorList>
            <consortium name="The MGC Project Team"/>
        </authorList>
    </citation>
    <scope>NUCLEOTIDE SEQUENCE [LARGE SCALE MRNA]</scope>
    <source>
        <tissue>Placenta</tissue>
    </source>
</reference>
<name>DMRTC_RAT</name>
<accession>Q4QR87</accession>